<organism>
    <name type="scientific">Alteromonas mediterranea (strain DSM 17117 / CIP 110805 / LMG 28347 / Deep ecotype)</name>
    <dbReference type="NCBI Taxonomy" id="1774373"/>
    <lineage>
        <taxon>Bacteria</taxon>
        <taxon>Pseudomonadati</taxon>
        <taxon>Pseudomonadota</taxon>
        <taxon>Gammaproteobacteria</taxon>
        <taxon>Alteromonadales</taxon>
        <taxon>Alteromonadaceae</taxon>
        <taxon>Alteromonas/Salinimonas group</taxon>
        <taxon>Alteromonas</taxon>
    </lineage>
</organism>
<evidence type="ECO:0000255" key="1">
    <source>
        <dbReference type="HAMAP-Rule" id="MF_00662"/>
    </source>
</evidence>
<evidence type="ECO:0000256" key="2">
    <source>
        <dbReference type="SAM" id="MobiDB-lite"/>
    </source>
</evidence>
<dbReference type="EC" id="4.1.1.65" evidence="1"/>
<dbReference type="EMBL" id="CP001103">
    <property type="protein sequence ID" value="AEA96699.1"/>
    <property type="molecule type" value="Genomic_DNA"/>
</dbReference>
<dbReference type="RefSeq" id="WP_012517054.1">
    <property type="nucleotide sequence ID" value="NC_011138.3"/>
</dbReference>
<dbReference type="SMR" id="B4S0J5"/>
<dbReference type="KEGG" id="amc:MADE_1002750"/>
<dbReference type="HOGENOM" id="CLU_029061_4_1_6"/>
<dbReference type="UniPathway" id="UPA00558">
    <property type="reaction ID" value="UER00616"/>
</dbReference>
<dbReference type="Proteomes" id="UP000001870">
    <property type="component" value="Chromosome"/>
</dbReference>
<dbReference type="GO" id="GO:0005886">
    <property type="term" value="C:plasma membrane"/>
    <property type="evidence" value="ECO:0007669"/>
    <property type="project" value="UniProtKB-SubCell"/>
</dbReference>
<dbReference type="GO" id="GO:0004609">
    <property type="term" value="F:phosphatidylserine decarboxylase activity"/>
    <property type="evidence" value="ECO:0007669"/>
    <property type="project" value="UniProtKB-UniRule"/>
</dbReference>
<dbReference type="GO" id="GO:0006646">
    <property type="term" value="P:phosphatidylethanolamine biosynthetic process"/>
    <property type="evidence" value="ECO:0007669"/>
    <property type="project" value="UniProtKB-UniRule"/>
</dbReference>
<dbReference type="HAMAP" id="MF_00662">
    <property type="entry name" value="PS_decarb_PSD_B_type1"/>
    <property type="match status" value="1"/>
</dbReference>
<dbReference type="InterPro" id="IPR003817">
    <property type="entry name" value="PS_Dcarbxylase"/>
</dbReference>
<dbReference type="InterPro" id="IPR033177">
    <property type="entry name" value="PSD-B"/>
</dbReference>
<dbReference type="InterPro" id="IPR033178">
    <property type="entry name" value="PSD_type1_pro"/>
</dbReference>
<dbReference type="NCBIfam" id="TIGR00163">
    <property type="entry name" value="PS_decarb"/>
    <property type="match status" value="1"/>
</dbReference>
<dbReference type="PANTHER" id="PTHR10067">
    <property type="entry name" value="PHOSPHATIDYLSERINE DECARBOXYLASE"/>
    <property type="match status" value="1"/>
</dbReference>
<dbReference type="PANTHER" id="PTHR10067:SF6">
    <property type="entry name" value="PHOSPHATIDYLSERINE DECARBOXYLASE PROENZYME, MITOCHONDRIAL"/>
    <property type="match status" value="1"/>
</dbReference>
<dbReference type="Pfam" id="PF02666">
    <property type="entry name" value="PS_Dcarbxylase"/>
    <property type="match status" value="1"/>
</dbReference>
<protein>
    <recommendedName>
        <fullName evidence="1">Phosphatidylserine decarboxylase proenzyme</fullName>
        <ecNumber evidence="1">4.1.1.65</ecNumber>
    </recommendedName>
    <component>
        <recommendedName>
            <fullName evidence="1">Phosphatidylserine decarboxylase alpha chain</fullName>
        </recommendedName>
    </component>
    <component>
        <recommendedName>
            <fullName evidence="1">Phosphatidylserine decarboxylase beta chain</fullName>
        </recommendedName>
    </component>
</protein>
<accession>B4S0J5</accession>
<accession>F2G7B9</accession>
<reference key="1">
    <citation type="journal article" date="2008" name="ISME J.">
        <title>Comparative genomics of two ecotypes of the marine planktonic copiotroph Alteromonas macleodii suggests alternative lifestyles associated with different kinds of particulate organic matter.</title>
        <authorList>
            <person name="Ivars-Martinez E."/>
            <person name="Martin-Cuadrado A.-B."/>
            <person name="D'Auria G."/>
            <person name="Mira A."/>
            <person name="Ferriera S."/>
            <person name="Johnson J."/>
            <person name="Friedman R."/>
            <person name="Rodriguez-Valera F."/>
        </authorList>
    </citation>
    <scope>NUCLEOTIDE SEQUENCE [LARGE SCALE GENOMIC DNA]</scope>
    <source>
        <strain>DSM 17117 / CIP 110805 / LMG 28347 / Deep ecotype</strain>
    </source>
</reference>
<keyword id="KW-1003">Cell membrane</keyword>
<keyword id="KW-0210">Decarboxylase</keyword>
<keyword id="KW-0444">Lipid biosynthesis</keyword>
<keyword id="KW-0443">Lipid metabolism</keyword>
<keyword id="KW-0456">Lyase</keyword>
<keyword id="KW-0472">Membrane</keyword>
<keyword id="KW-0594">Phospholipid biosynthesis</keyword>
<keyword id="KW-1208">Phospholipid metabolism</keyword>
<keyword id="KW-0670">Pyruvate</keyword>
<keyword id="KW-0865">Zymogen</keyword>
<comment type="function">
    <text evidence="1">Catalyzes the formation of phosphatidylethanolamine (PtdEtn) from phosphatidylserine (PtdSer).</text>
</comment>
<comment type="catalytic activity">
    <reaction evidence="1">
        <text>a 1,2-diacyl-sn-glycero-3-phospho-L-serine + H(+) = a 1,2-diacyl-sn-glycero-3-phosphoethanolamine + CO2</text>
        <dbReference type="Rhea" id="RHEA:20828"/>
        <dbReference type="ChEBI" id="CHEBI:15378"/>
        <dbReference type="ChEBI" id="CHEBI:16526"/>
        <dbReference type="ChEBI" id="CHEBI:57262"/>
        <dbReference type="ChEBI" id="CHEBI:64612"/>
        <dbReference type="EC" id="4.1.1.65"/>
    </reaction>
</comment>
<comment type="cofactor">
    <cofactor evidence="1">
        <name>pyruvate</name>
        <dbReference type="ChEBI" id="CHEBI:15361"/>
    </cofactor>
    <text evidence="1">Binds 1 pyruvoyl group covalently per subunit.</text>
</comment>
<comment type="pathway">
    <text evidence="1">Phospholipid metabolism; phosphatidylethanolamine biosynthesis; phosphatidylethanolamine from CDP-diacylglycerol: step 2/2.</text>
</comment>
<comment type="subunit">
    <text evidence="1">Heterodimer of a large membrane-associated beta subunit and a small pyruvoyl-containing alpha subunit.</text>
</comment>
<comment type="subcellular location">
    <subcellularLocation>
        <location evidence="1">Cell membrane</location>
        <topology evidence="1">Peripheral membrane protein</topology>
    </subcellularLocation>
</comment>
<comment type="PTM">
    <text evidence="1">Is synthesized initially as an inactive proenzyme. Formation of the active enzyme involves a self-maturation process in which the active site pyruvoyl group is generated from an internal serine residue via an autocatalytic post-translational modification. Two non-identical subunits are generated from the proenzyme in this reaction, and the pyruvate is formed at the N-terminus of the alpha chain, which is derived from the carboxyl end of the proenzyme. The autoendoproteolytic cleavage occurs by a canonical serine protease mechanism, in which the side chain hydroxyl group of the serine supplies its oxygen atom to form the C-terminus of the beta chain, while the remainder of the serine residue undergoes an oxidative deamination to produce ammonia and the pyruvoyl prosthetic group on the alpha chain. During this reaction, the Ser that is part of the protease active site of the proenzyme becomes the pyruvoyl prosthetic group, which constitutes an essential element of the active site of the mature decarboxylase.</text>
</comment>
<comment type="similarity">
    <text evidence="1">Belongs to the phosphatidylserine decarboxylase family. PSD-B subfamily. Prokaryotic type I sub-subfamily.</text>
</comment>
<feature type="chain" id="PRO_1000131334" description="Phosphatidylserine decarboxylase beta chain" evidence="1">
    <location>
        <begin position="1"/>
        <end position="252"/>
    </location>
</feature>
<feature type="chain" id="PRO_1000131335" description="Phosphatidylserine decarboxylase alpha chain" evidence="1">
    <location>
        <begin position="253"/>
        <end position="325"/>
    </location>
</feature>
<feature type="region of interest" description="Disordered" evidence="2">
    <location>
        <begin position="281"/>
        <end position="325"/>
    </location>
</feature>
<feature type="compositionally biased region" description="Polar residues" evidence="2">
    <location>
        <begin position="284"/>
        <end position="305"/>
    </location>
</feature>
<feature type="active site" description="Charge relay system; for autoendoproteolytic cleavage activity" evidence="1">
    <location>
        <position position="90"/>
    </location>
</feature>
<feature type="active site" description="Charge relay system; for autoendoproteolytic cleavage activity" evidence="1">
    <location>
        <position position="147"/>
    </location>
</feature>
<feature type="active site" description="Charge relay system; for autoendoproteolytic cleavage activity" evidence="1">
    <location>
        <position position="253"/>
    </location>
</feature>
<feature type="active site" description="Schiff-base intermediate with substrate; via pyruvic acid; for decarboxylase activity" evidence="1">
    <location>
        <position position="253"/>
    </location>
</feature>
<feature type="site" description="Cleavage (non-hydrolytic); by autocatalysis" evidence="1">
    <location>
        <begin position="252"/>
        <end position="253"/>
    </location>
</feature>
<feature type="modified residue" description="Pyruvic acid (Ser); by autocatalysis" evidence="1">
    <location>
        <position position="253"/>
    </location>
</feature>
<proteinExistence type="inferred from homology"/>
<gene>
    <name evidence="1" type="primary">psd</name>
    <name type="ordered locus">MADE_1002750</name>
</gene>
<name>PSD_ALTMD</name>
<sequence length="325" mass="35872">MLDWLKVNLQYVTPKHLLSRLVGKLAEAEMGSVTTFFIKLFIKQYNVDMTEALHEKPEHYRSFNKFFTRTLKPEARTIDESDDVLIHAVDGTVSQFGDIRSDSIFQAKGHDFSLTTLLGGKPDVAAPFKNGKFATVYLAPRDYHRIHMPIEGTLTDMLYVPGELFSVNPLTAQNIPGLFARNERVVALFDTPVGKMAMVLVGATIVASIETVWAGTVTPPTGKTVQHWSYETDSEAAVKLEKGAELGRFKLGSTIVVCFEKDMIDFEDIAPGMVTRLGEPMASKMSSQKAITPEQTTETPVQASNEFDDNAGETKKDTPSEGADS</sequence>